<organism>
    <name type="scientific">Novosphingobium aromaticivorans (strain ATCC 700278 / DSM 12444 / CCUG 56034 / CIP 105152 / NBRC 16084 / F199)</name>
    <dbReference type="NCBI Taxonomy" id="279238"/>
    <lineage>
        <taxon>Bacteria</taxon>
        <taxon>Pseudomonadati</taxon>
        <taxon>Pseudomonadota</taxon>
        <taxon>Alphaproteobacteria</taxon>
        <taxon>Sphingomonadales</taxon>
        <taxon>Sphingomonadaceae</taxon>
        <taxon>Novosphingobium</taxon>
    </lineage>
</organism>
<gene>
    <name evidence="1" type="primary">rpmD</name>
    <name type="ordered locus">Saro_1267</name>
</gene>
<feature type="chain" id="PRO_1000056083" description="Large ribosomal subunit protein uL30">
    <location>
        <begin position="1"/>
        <end position="58"/>
    </location>
</feature>
<protein>
    <recommendedName>
        <fullName evidence="1">Large ribosomal subunit protein uL30</fullName>
    </recommendedName>
    <alternativeName>
        <fullName evidence="2">50S ribosomal protein L30</fullName>
    </alternativeName>
</protein>
<dbReference type="EMBL" id="CP000248">
    <property type="protein sequence ID" value="ABD25711.1"/>
    <property type="molecule type" value="Genomic_DNA"/>
</dbReference>
<dbReference type="RefSeq" id="WP_011444925.1">
    <property type="nucleotide sequence ID" value="NC_007794.1"/>
</dbReference>
<dbReference type="SMR" id="Q2G8W2"/>
<dbReference type="STRING" id="279238.Saro_1267"/>
<dbReference type="KEGG" id="nar:Saro_1267"/>
<dbReference type="eggNOG" id="COG1841">
    <property type="taxonomic scope" value="Bacteria"/>
</dbReference>
<dbReference type="HOGENOM" id="CLU_131047_1_2_5"/>
<dbReference type="Proteomes" id="UP000009134">
    <property type="component" value="Chromosome"/>
</dbReference>
<dbReference type="GO" id="GO:0015934">
    <property type="term" value="C:large ribosomal subunit"/>
    <property type="evidence" value="ECO:0007669"/>
    <property type="project" value="InterPro"/>
</dbReference>
<dbReference type="GO" id="GO:0003735">
    <property type="term" value="F:structural constituent of ribosome"/>
    <property type="evidence" value="ECO:0007669"/>
    <property type="project" value="InterPro"/>
</dbReference>
<dbReference type="GO" id="GO:0006412">
    <property type="term" value="P:translation"/>
    <property type="evidence" value="ECO:0007669"/>
    <property type="project" value="UniProtKB-UniRule"/>
</dbReference>
<dbReference type="CDD" id="cd01658">
    <property type="entry name" value="Ribosomal_L30"/>
    <property type="match status" value="1"/>
</dbReference>
<dbReference type="Gene3D" id="3.30.1390.20">
    <property type="entry name" value="Ribosomal protein L30, ferredoxin-like fold domain"/>
    <property type="match status" value="1"/>
</dbReference>
<dbReference type="HAMAP" id="MF_01371_B">
    <property type="entry name" value="Ribosomal_uL30_B"/>
    <property type="match status" value="1"/>
</dbReference>
<dbReference type="InterPro" id="IPR036919">
    <property type="entry name" value="Ribo_uL30_ferredoxin-like_sf"/>
</dbReference>
<dbReference type="InterPro" id="IPR005996">
    <property type="entry name" value="Ribosomal_uL30_bac-type"/>
</dbReference>
<dbReference type="InterPro" id="IPR016082">
    <property type="entry name" value="Ribosomal_uL30_ferredoxin-like"/>
</dbReference>
<dbReference type="NCBIfam" id="TIGR01308">
    <property type="entry name" value="rpmD_bact"/>
    <property type="match status" value="1"/>
</dbReference>
<dbReference type="Pfam" id="PF00327">
    <property type="entry name" value="Ribosomal_L30"/>
    <property type="match status" value="1"/>
</dbReference>
<dbReference type="PIRSF" id="PIRSF002211">
    <property type="entry name" value="Ribosomal_L30_bac-type"/>
    <property type="match status" value="1"/>
</dbReference>
<dbReference type="SUPFAM" id="SSF55129">
    <property type="entry name" value="Ribosomal protein L30p/L7e"/>
    <property type="match status" value="1"/>
</dbReference>
<reference key="1">
    <citation type="submission" date="2006-01" db="EMBL/GenBank/DDBJ databases">
        <title>Complete sequence of Novosphingobium aromaticivorans DSM 12444.</title>
        <authorList>
            <consortium name="US DOE Joint Genome Institute"/>
            <person name="Copeland A."/>
            <person name="Lucas S."/>
            <person name="Lapidus A."/>
            <person name="Barry K."/>
            <person name="Detter J.C."/>
            <person name="Glavina T."/>
            <person name="Hammon N."/>
            <person name="Israni S."/>
            <person name="Pitluck S."/>
            <person name="Chain P."/>
            <person name="Malfatti S."/>
            <person name="Shin M."/>
            <person name="Vergez L."/>
            <person name="Schmutz J."/>
            <person name="Larimer F."/>
            <person name="Land M."/>
            <person name="Kyrpides N."/>
            <person name="Ivanova N."/>
            <person name="Fredrickson J."/>
            <person name="Balkwill D."/>
            <person name="Romine M.F."/>
            <person name="Richardson P."/>
        </authorList>
    </citation>
    <scope>NUCLEOTIDE SEQUENCE [LARGE SCALE GENOMIC DNA]</scope>
    <source>
        <strain>ATCC 700278 / DSM 12444 / CCUG 56034 / CIP 105152 / NBRC 16084 / F199</strain>
    </source>
</reference>
<name>RL30_NOVAD</name>
<proteinExistence type="inferred from homology"/>
<sequence>MATIKIKQIGSPIRRPESQKKVLIGLGLGKMHRVVEVEDTPEVRGAIAKLPHMVAVVD</sequence>
<keyword id="KW-1185">Reference proteome</keyword>
<keyword id="KW-0687">Ribonucleoprotein</keyword>
<keyword id="KW-0689">Ribosomal protein</keyword>
<evidence type="ECO:0000255" key="1">
    <source>
        <dbReference type="HAMAP-Rule" id="MF_01371"/>
    </source>
</evidence>
<evidence type="ECO:0000305" key="2"/>
<accession>Q2G8W2</accession>
<comment type="subunit">
    <text evidence="1">Part of the 50S ribosomal subunit.</text>
</comment>
<comment type="similarity">
    <text evidence="1">Belongs to the universal ribosomal protein uL30 family.</text>
</comment>